<accession>C1CE02</accession>
<sequence>MTYPNLLDRFLTYVKVNTRSDEHSTTTPSTQSQVDFATNVLIPEMKRVGLQNVYYLPNGFAIGTLPANDPSLTRKIGFISHMDTADFNAEGVNPQVIENYDGGVIELGNSGFKLDPADFKSLEKYPGQTLITTDGTSLLGADDKSGIAEIMTTIEYLTAHPEIKHCEIRVGFGPDEEIGVGANKFDAEDFDVDFAYTVDGGPLGELQYETFSAAGAELHFQGRNVHPGTAKGQMVNALQLAIDFHNQLPENDRPELTEGYQGFYHLMDVTGSVEEVRASYIIRDFEKDAFEARKASMQSIADKMNEELGSDRVTLNLTDQYYNMKEVIEKDMTPITIAKAVMEDLGITPIIEPIRGGTDGSKISFMGIPTPNIFAGGENMHGRFEYVSLQTMERAVDTIIGIVAYKG</sequence>
<organism>
    <name type="scientific">Streptococcus pneumoniae (strain JJA)</name>
    <dbReference type="NCBI Taxonomy" id="488222"/>
    <lineage>
        <taxon>Bacteria</taxon>
        <taxon>Bacillati</taxon>
        <taxon>Bacillota</taxon>
        <taxon>Bacilli</taxon>
        <taxon>Lactobacillales</taxon>
        <taxon>Streptococcaceae</taxon>
        <taxon>Streptococcus</taxon>
    </lineage>
</organism>
<evidence type="ECO:0000255" key="1">
    <source>
        <dbReference type="HAMAP-Rule" id="MF_00550"/>
    </source>
</evidence>
<keyword id="KW-0031">Aminopeptidase</keyword>
<keyword id="KW-0963">Cytoplasm</keyword>
<keyword id="KW-0378">Hydrolase</keyword>
<keyword id="KW-0479">Metal-binding</keyword>
<keyword id="KW-0482">Metalloprotease</keyword>
<keyword id="KW-0645">Protease</keyword>
<keyword id="KW-0862">Zinc</keyword>
<proteinExistence type="inferred from homology"/>
<name>PEPT_STRZJ</name>
<protein>
    <recommendedName>
        <fullName evidence="1">Peptidase T</fullName>
        <ecNumber evidence="1">3.4.11.4</ecNumber>
    </recommendedName>
    <alternativeName>
        <fullName evidence="1">Aminotripeptidase</fullName>
        <shortName evidence="1">Tripeptidase</shortName>
    </alternativeName>
    <alternativeName>
        <fullName evidence="1">Tripeptide aminopeptidase</fullName>
    </alternativeName>
</protein>
<reference key="1">
    <citation type="journal article" date="2010" name="Genome Biol.">
        <title>Structure and dynamics of the pan-genome of Streptococcus pneumoniae and closely related species.</title>
        <authorList>
            <person name="Donati C."/>
            <person name="Hiller N.L."/>
            <person name="Tettelin H."/>
            <person name="Muzzi A."/>
            <person name="Croucher N.J."/>
            <person name="Angiuoli S.V."/>
            <person name="Oggioni M."/>
            <person name="Dunning Hotopp J.C."/>
            <person name="Hu F.Z."/>
            <person name="Riley D.R."/>
            <person name="Covacci A."/>
            <person name="Mitchell T.J."/>
            <person name="Bentley S.D."/>
            <person name="Kilian M."/>
            <person name="Ehrlich G.D."/>
            <person name="Rappuoli R."/>
            <person name="Moxon E.R."/>
            <person name="Masignani V."/>
        </authorList>
    </citation>
    <scope>NUCLEOTIDE SEQUENCE [LARGE SCALE GENOMIC DNA]</scope>
    <source>
        <strain>JJA</strain>
    </source>
</reference>
<dbReference type="EC" id="3.4.11.4" evidence="1"/>
<dbReference type="EMBL" id="CP000919">
    <property type="protein sequence ID" value="ACO20120.1"/>
    <property type="molecule type" value="Genomic_DNA"/>
</dbReference>
<dbReference type="RefSeq" id="WP_000222046.1">
    <property type="nucleotide sequence ID" value="NC_012466.1"/>
</dbReference>
<dbReference type="SMR" id="C1CE02"/>
<dbReference type="MEROPS" id="M20.003"/>
<dbReference type="KEGG" id="sjj:SPJ_0948"/>
<dbReference type="HOGENOM" id="CLU_053676_0_0_9"/>
<dbReference type="Proteomes" id="UP000002206">
    <property type="component" value="Chromosome"/>
</dbReference>
<dbReference type="GO" id="GO:0005829">
    <property type="term" value="C:cytosol"/>
    <property type="evidence" value="ECO:0007669"/>
    <property type="project" value="TreeGrafter"/>
</dbReference>
<dbReference type="GO" id="GO:0008237">
    <property type="term" value="F:metallopeptidase activity"/>
    <property type="evidence" value="ECO:0007669"/>
    <property type="project" value="UniProtKB-KW"/>
</dbReference>
<dbReference type="GO" id="GO:0045148">
    <property type="term" value="F:tripeptide aminopeptidase activity"/>
    <property type="evidence" value="ECO:0007669"/>
    <property type="project" value="UniProtKB-UniRule"/>
</dbReference>
<dbReference type="GO" id="GO:0008270">
    <property type="term" value="F:zinc ion binding"/>
    <property type="evidence" value="ECO:0007669"/>
    <property type="project" value="UniProtKB-UniRule"/>
</dbReference>
<dbReference type="GO" id="GO:0043171">
    <property type="term" value="P:peptide catabolic process"/>
    <property type="evidence" value="ECO:0007669"/>
    <property type="project" value="UniProtKB-UniRule"/>
</dbReference>
<dbReference type="GO" id="GO:0006508">
    <property type="term" value="P:proteolysis"/>
    <property type="evidence" value="ECO:0007669"/>
    <property type="project" value="UniProtKB-UniRule"/>
</dbReference>
<dbReference type="CDD" id="cd03892">
    <property type="entry name" value="M20_peptT"/>
    <property type="match status" value="1"/>
</dbReference>
<dbReference type="FunFam" id="3.30.70.360:FF:000002">
    <property type="entry name" value="Peptidase T"/>
    <property type="match status" value="1"/>
</dbReference>
<dbReference type="Gene3D" id="3.30.70.360">
    <property type="match status" value="1"/>
</dbReference>
<dbReference type="Gene3D" id="3.40.630.10">
    <property type="entry name" value="Zn peptidases"/>
    <property type="match status" value="1"/>
</dbReference>
<dbReference type="HAMAP" id="MF_00550">
    <property type="entry name" value="Aminopeptidase_M20"/>
    <property type="match status" value="1"/>
</dbReference>
<dbReference type="InterPro" id="IPR001261">
    <property type="entry name" value="ArgE/DapE_CS"/>
</dbReference>
<dbReference type="InterPro" id="IPR036264">
    <property type="entry name" value="Bact_exopeptidase_dim_dom"/>
</dbReference>
<dbReference type="InterPro" id="IPR002933">
    <property type="entry name" value="Peptidase_M20"/>
</dbReference>
<dbReference type="InterPro" id="IPR011650">
    <property type="entry name" value="Peptidase_M20_dimer"/>
</dbReference>
<dbReference type="InterPro" id="IPR010161">
    <property type="entry name" value="Peptidase_M20B"/>
</dbReference>
<dbReference type="NCBIfam" id="TIGR01882">
    <property type="entry name" value="peptidase-T"/>
    <property type="match status" value="1"/>
</dbReference>
<dbReference type="NCBIfam" id="NF003976">
    <property type="entry name" value="PRK05469.1"/>
    <property type="match status" value="1"/>
</dbReference>
<dbReference type="NCBIfam" id="NF009920">
    <property type="entry name" value="PRK13381.1"/>
    <property type="match status" value="1"/>
</dbReference>
<dbReference type="PANTHER" id="PTHR42994">
    <property type="entry name" value="PEPTIDASE T"/>
    <property type="match status" value="1"/>
</dbReference>
<dbReference type="PANTHER" id="PTHR42994:SF1">
    <property type="entry name" value="PEPTIDASE T"/>
    <property type="match status" value="1"/>
</dbReference>
<dbReference type="Pfam" id="PF07687">
    <property type="entry name" value="M20_dimer"/>
    <property type="match status" value="1"/>
</dbReference>
<dbReference type="Pfam" id="PF01546">
    <property type="entry name" value="Peptidase_M20"/>
    <property type="match status" value="1"/>
</dbReference>
<dbReference type="PIRSF" id="PIRSF037215">
    <property type="entry name" value="Peptidase_M20B"/>
    <property type="match status" value="1"/>
</dbReference>
<dbReference type="SUPFAM" id="SSF55031">
    <property type="entry name" value="Bacterial exopeptidase dimerisation domain"/>
    <property type="match status" value="1"/>
</dbReference>
<dbReference type="SUPFAM" id="SSF53187">
    <property type="entry name" value="Zn-dependent exopeptidases"/>
    <property type="match status" value="1"/>
</dbReference>
<dbReference type="PROSITE" id="PS00758">
    <property type="entry name" value="ARGE_DAPE_CPG2_1"/>
    <property type="match status" value="1"/>
</dbReference>
<dbReference type="PROSITE" id="PS00759">
    <property type="entry name" value="ARGE_DAPE_CPG2_2"/>
    <property type="match status" value="1"/>
</dbReference>
<feature type="chain" id="PRO_1000200901" description="Peptidase T">
    <location>
        <begin position="1"/>
        <end position="407"/>
    </location>
</feature>
<feature type="active site" evidence="1">
    <location>
        <position position="83"/>
    </location>
</feature>
<feature type="active site" description="Proton acceptor" evidence="1">
    <location>
        <position position="176"/>
    </location>
</feature>
<feature type="binding site" evidence="1">
    <location>
        <position position="81"/>
    </location>
    <ligand>
        <name>Zn(2+)</name>
        <dbReference type="ChEBI" id="CHEBI:29105"/>
        <label>1</label>
    </ligand>
</feature>
<feature type="binding site" evidence="1">
    <location>
        <position position="142"/>
    </location>
    <ligand>
        <name>Zn(2+)</name>
        <dbReference type="ChEBI" id="CHEBI:29105"/>
        <label>1</label>
    </ligand>
</feature>
<feature type="binding site" evidence="1">
    <location>
        <position position="142"/>
    </location>
    <ligand>
        <name>Zn(2+)</name>
        <dbReference type="ChEBI" id="CHEBI:29105"/>
        <label>2</label>
    </ligand>
</feature>
<feature type="binding site" evidence="1">
    <location>
        <position position="177"/>
    </location>
    <ligand>
        <name>Zn(2+)</name>
        <dbReference type="ChEBI" id="CHEBI:29105"/>
        <label>2</label>
    </ligand>
</feature>
<feature type="binding site" evidence="1">
    <location>
        <position position="199"/>
    </location>
    <ligand>
        <name>Zn(2+)</name>
        <dbReference type="ChEBI" id="CHEBI:29105"/>
        <label>1</label>
    </ligand>
</feature>
<feature type="binding site" evidence="1">
    <location>
        <position position="381"/>
    </location>
    <ligand>
        <name>Zn(2+)</name>
        <dbReference type="ChEBI" id="CHEBI:29105"/>
        <label>2</label>
    </ligand>
</feature>
<comment type="function">
    <text evidence="1">Cleaves the N-terminal amino acid of tripeptides.</text>
</comment>
<comment type="catalytic activity">
    <reaction evidence="1">
        <text>Release of the N-terminal residue from a tripeptide.</text>
        <dbReference type="EC" id="3.4.11.4"/>
    </reaction>
</comment>
<comment type="cofactor">
    <cofactor evidence="1">
        <name>Zn(2+)</name>
        <dbReference type="ChEBI" id="CHEBI:29105"/>
    </cofactor>
    <text evidence="1">Binds 2 Zn(2+) ions per subunit.</text>
</comment>
<comment type="subcellular location">
    <subcellularLocation>
        <location evidence="1">Cytoplasm</location>
    </subcellularLocation>
</comment>
<comment type="similarity">
    <text evidence="1">Belongs to the peptidase M20B family.</text>
</comment>
<gene>
    <name evidence="1" type="primary">pepT</name>
    <name type="ordered locus">SPJ_0948</name>
</gene>